<organism>
    <name type="scientific">Senecio vernalis</name>
    <name type="common">Spring groundsel</name>
    <dbReference type="NCBI Taxonomy" id="93496"/>
    <lineage>
        <taxon>Eukaryota</taxon>
        <taxon>Viridiplantae</taxon>
        <taxon>Streptophyta</taxon>
        <taxon>Embryophyta</taxon>
        <taxon>Tracheophyta</taxon>
        <taxon>Spermatophyta</taxon>
        <taxon>Magnoliopsida</taxon>
        <taxon>eudicotyledons</taxon>
        <taxon>Gunneridae</taxon>
        <taxon>Pentapetalae</taxon>
        <taxon>asterids</taxon>
        <taxon>campanulids</taxon>
        <taxon>Asterales</taxon>
        <taxon>Asteraceae</taxon>
        <taxon>Asteroideae</taxon>
        <taxon>Senecioneae</taxon>
        <taxon>Senecioninae</taxon>
        <taxon>Senecio</taxon>
    </lineage>
</organism>
<proteinExistence type="evidence at protein level"/>
<keyword id="KW-0903">Direct protein sequencing</keyword>
<keyword id="KW-0520">NAD</keyword>
<keyword id="KW-0808">Transferase</keyword>
<comment type="function">
    <text>Catalyzes the transfer of an aminobutyl unit from spermidine onto putrescine. The resulting polyamine homospermidine is a precursor in the biosynthesis of pyrrolizidine alkaloids.</text>
</comment>
<comment type="catalytic activity">
    <reaction>
        <text>putrescine + spermidine = sym-homospermidine + propane-1,3-diamine</text>
        <dbReference type="Rhea" id="RHEA:11236"/>
        <dbReference type="ChEBI" id="CHEBI:57484"/>
        <dbReference type="ChEBI" id="CHEBI:57811"/>
        <dbReference type="ChEBI" id="CHEBI:57834"/>
        <dbReference type="ChEBI" id="CHEBI:326268"/>
        <dbReference type="EC" id="2.5.1.45"/>
    </reaction>
</comment>
<comment type="cofactor">
    <cofactor>
        <name>NAD(+)</name>
        <dbReference type="ChEBI" id="CHEBI:57540"/>
    </cofactor>
</comment>
<comment type="pathway">
    <text>Alkaloid biosynthesis; pyrrolizidine alkaloid biosynthesis.</text>
</comment>
<comment type="subunit">
    <text>Homotetramer.</text>
</comment>
<comment type="tissue specificity">
    <text>Expressed in roots.</text>
</comment>
<comment type="PTM">
    <text>The N-terminus is blocked.</text>
</comment>
<comment type="similarity">
    <text evidence="1">Belongs to the deoxyhypusine synthase family.</text>
</comment>
<accession>P60038</accession>
<name>HSS2_SENVE</name>
<reference key="1">
    <citation type="journal article" date="1999" name="Proc. Natl. Acad. Sci. U.S.A.">
        <title>Homospermidine synthase, the first pathway-specific enzyme of pyrrolizidine alkaloid biosynthesis, evolved from deoxyhypusine synthase.</title>
        <authorList>
            <person name="Ober D."/>
            <person name="Hartmann T."/>
        </authorList>
    </citation>
    <scope>NUCLEOTIDE SEQUENCE</scope>
    <scope>PROTEIN SEQUENCE OF 7-17; 151-159; 211-224 AND 278-289</scope>
    <source>
        <tissue>Root</tissue>
    </source>
</reference>
<reference key="2">
    <citation type="journal article" date="2000" name="Phytochemistry">
        <title>Cloning and expression of homospermidine synthase from Senecio vulgaris: a revision.</title>
        <authorList>
            <person name="Ober D."/>
            <person name="Harms R."/>
            <person name="Hartmann T."/>
        </authorList>
    </citation>
    <scope>NUCLEOTIDE SEQUENCE</scope>
</reference>
<feature type="chain" id="PRO_0000134518" description="Homospermidine synthase 2">
    <location>
        <begin position="1"/>
        <end position="370"/>
    </location>
</feature>
<evidence type="ECO:0000305" key="1"/>
<protein>
    <recommendedName>
        <fullName>Homospermidine synthase 2</fullName>
        <shortName>HSS2</shortName>
        <ecNumber>2.5.1.45</ecNumber>
    </recommendedName>
</protein>
<dbReference type="EC" id="2.5.1.45"/>
<dbReference type="SMR" id="P60038"/>
<dbReference type="SABIO-RK" id="P60038"/>
<dbReference type="UniPathway" id="UPA00329"/>
<dbReference type="GO" id="GO:0005737">
    <property type="term" value="C:cytoplasm"/>
    <property type="evidence" value="ECO:0007669"/>
    <property type="project" value="TreeGrafter"/>
</dbReference>
<dbReference type="GO" id="GO:0034038">
    <property type="term" value="F:deoxyhypusine synthase activity"/>
    <property type="evidence" value="ECO:0007669"/>
    <property type="project" value="TreeGrafter"/>
</dbReference>
<dbReference type="GO" id="GO:0050514">
    <property type="term" value="F:homospermidine synthase (spermidine-specific) activity"/>
    <property type="evidence" value="ECO:0007669"/>
    <property type="project" value="UniProtKB-EC"/>
</dbReference>
<dbReference type="FunFam" id="3.40.910.10:FF:000002">
    <property type="entry name" value="Deoxyhypusine synthase"/>
    <property type="match status" value="1"/>
</dbReference>
<dbReference type="Gene3D" id="3.40.910.10">
    <property type="entry name" value="Deoxyhypusine synthase"/>
    <property type="match status" value="1"/>
</dbReference>
<dbReference type="InterPro" id="IPR002773">
    <property type="entry name" value="Deoxyhypusine_synthase"/>
</dbReference>
<dbReference type="InterPro" id="IPR036982">
    <property type="entry name" value="Deoxyhypusine_synthase_sf"/>
</dbReference>
<dbReference type="InterPro" id="IPR029035">
    <property type="entry name" value="DHS-like_NAD/FAD-binding_dom"/>
</dbReference>
<dbReference type="NCBIfam" id="TIGR00321">
    <property type="entry name" value="dhys"/>
    <property type="match status" value="1"/>
</dbReference>
<dbReference type="PANTHER" id="PTHR11703">
    <property type="entry name" value="DEOXYHYPUSINE SYNTHASE"/>
    <property type="match status" value="1"/>
</dbReference>
<dbReference type="PANTHER" id="PTHR11703:SF0">
    <property type="entry name" value="DEOXYHYPUSINE SYNTHASE"/>
    <property type="match status" value="1"/>
</dbReference>
<dbReference type="Pfam" id="PF01916">
    <property type="entry name" value="DS"/>
    <property type="match status" value="1"/>
</dbReference>
<dbReference type="SUPFAM" id="SSF52467">
    <property type="entry name" value="DHS-like NAD/FAD-binding domain"/>
    <property type="match status" value="1"/>
</dbReference>
<sequence>MAESNKEAIDSARSNVFKESESLEGTCAKIGGYDFNNGIDHSKLLKSMVSTGFQASNLGDAMIITNQMLEWRLSHDEVPEHCSEEEKKNRESVKCKIFLGFTSNLISSGVRETICYLAQHRMVDVLVTTTGGIEEDFIKCLASTYKGKFSLPGADLRSKGLNRIGNLIVPNDNYIKFEDWIIPIFDQMLIEQKTQNVLWTPSRMIARLGKEINNETSYLYWAYKNNIPVFCPSITDGSIGDMLYFHSVSNPGPGLVVDIVQDVIAMDNEAVHASPQKTGIIILGGGLPKHHICNANMMRNGADFAVFINTAQEYDGSDSGARPDEAVSWGKISSTGKAVKVHCDATIAFPLLVAETFAVKKEKASKVNGF</sequence>